<proteinExistence type="inferred from homology"/>
<accession>Q65RJ7</accession>
<organism>
    <name type="scientific">Mannheimia succiniciproducens (strain KCTC 0769BP / MBEL55E)</name>
    <dbReference type="NCBI Taxonomy" id="221988"/>
    <lineage>
        <taxon>Bacteria</taxon>
        <taxon>Pseudomonadati</taxon>
        <taxon>Pseudomonadota</taxon>
        <taxon>Gammaproteobacteria</taxon>
        <taxon>Pasteurellales</taxon>
        <taxon>Pasteurellaceae</taxon>
        <taxon>Basfia</taxon>
    </lineage>
</organism>
<name>PUR4_MANSM</name>
<sequence>MFQIFRGSPALSEFRLNQLSARFQKADLPVKSCYAEYLHFADLSAGLSAEETDELEQLLHYGPTLAQHESKGECFVVIPRVGTISSWSSKATDIAHNCGLDKVVRLERGIAYYFEFERTLSAEQQQRLVSHIHDRMMETVVRAPEQAAVLFDSQDPKPFTTVDILNGGRKALEIANVELGLALASDEMDYLVENFTALGRNPNDIELYMFAQANSEHCRHKIFNADWVIDGEKQEKSLFKMIKNTFEKTPDHVLSAYKDNAAVMEGSKVGRFFADQDGQYRYHNEDAHILMKVETHNHPTAISPFPGAATGSGGEIRDEGATGRGAKPKAGLVGFSVSNLVIPGFEQPWENELSKPSRISSALDIMIEGPLGGAAFNNEFGRPALLGYFRTYEEKVNSFAGEEVRGYHKPIMLAGGIGNIRAEHVQKGEIPVGAKLIVLGGPAMNIGLGGGAASSMTSGKSKEDLDFASVQRDNPEMERRCQEVIDRCWQMGEGNPIAFIHDVGAGGLSNAMPELVHDGGRGGKFELRNILCDERGMSPLEIWCNESQERYVLAVAPENLAVFEELCQRERAPYAIIGEATEEEHLTLHDNHFDNNPIDLPMSLLLGKTPKMTRDVKSTQVNNSPVDQTNIELKEAFHRVLRLPVVAEKTFLITIGDRTVTGMVARDQMVGPWQIPVSDVAVTTAALDTYHGEAMSIGERAPVALLDFAASARLAVAESITNIAATNIGDIKRIKLSANWMSAAGHEGEDAGLYEAVKAVGEELCPALGLTVPVGKDSMSMKTTWSENGEQKTVTAPLSLVISAFARVEDVRKTVTPQLRTDKGETALLLIDLGEGKNRLGATALAQVYKQLGDKPADVVNVELLKGFYNAMQTLVQQGKLLAYHDRSDGGLIVTLAEMAFAGNCGIRAEISALGDNDLGILFSEELGAVIQVRESDLAAVREVLTQHGLIHLTKDLGLVTEYDEFEIKRGTKVVLSEKRSELRGIWAELTHQMQRLRDNPECADQEFAAKKDPANQGFSAHLTYDINEDVAAPYIATGKKPRIAVLREQGVNSHVEMGAAFDRAGFEAIDVHMSDLHTARQNLKDFNALVACGGFSYGDVLGAGGGWAKSVLFNTALRDQFQAFFEREDTLALGVCNGCQMISTLADIIPGTENWPRFVRNTSERFEARAALVRINESNSVWFQGMAGSHMPIAVSHGEGRVEFKNDSQLQGLRDQGLIIAQYVDNNIRPTEVYPANPNGSVDGITALSNTNGRVAIMMPHPERVFRTVSNSWHPEDWSEDGAWMRLFRNARVFFK</sequence>
<feature type="chain" id="PRO_0000264579" description="Phosphoribosylformylglycinamidine synthase">
    <location>
        <begin position="1"/>
        <end position="1297"/>
    </location>
</feature>
<feature type="domain" description="Glutamine amidotransferase type-1" evidence="1">
    <location>
        <begin position="1044"/>
        <end position="1297"/>
    </location>
</feature>
<feature type="region of interest" description="Disordered" evidence="2">
    <location>
        <begin position="305"/>
        <end position="324"/>
    </location>
</feature>
<feature type="active site" description="Nucleophile" evidence="1">
    <location>
        <position position="1137"/>
    </location>
</feature>
<feature type="active site" evidence="1">
    <location>
        <position position="1262"/>
    </location>
</feature>
<feature type="active site" evidence="1">
    <location>
        <position position="1264"/>
    </location>
</feature>
<feature type="binding site" evidence="1">
    <location>
        <begin position="307"/>
        <end position="318"/>
    </location>
    <ligand>
        <name>ATP</name>
        <dbReference type="ChEBI" id="CHEBI:30616"/>
    </ligand>
</feature>
<feature type="binding site" evidence="1">
    <location>
        <position position="679"/>
    </location>
    <ligand>
        <name>Mg(2+)</name>
        <dbReference type="ChEBI" id="CHEBI:18420"/>
    </ligand>
</feature>
<feature type="binding site" evidence="1">
    <location>
        <position position="718"/>
    </location>
    <ligand>
        <name>Mg(2+)</name>
        <dbReference type="ChEBI" id="CHEBI:18420"/>
    </ligand>
</feature>
<feature type="binding site" evidence="1">
    <location>
        <position position="722"/>
    </location>
    <ligand>
        <name>Mg(2+)</name>
        <dbReference type="ChEBI" id="CHEBI:18420"/>
    </ligand>
</feature>
<feature type="binding site" evidence="1">
    <location>
        <position position="886"/>
    </location>
    <ligand>
        <name>Mg(2+)</name>
        <dbReference type="ChEBI" id="CHEBI:18420"/>
    </ligand>
</feature>
<feature type="binding site" evidence="1">
    <location>
        <position position="888"/>
    </location>
    <ligand>
        <name>ATP</name>
        <dbReference type="ChEBI" id="CHEBI:30616"/>
    </ligand>
</feature>
<gene>
    <name evidence="1" type="primary">purL</name>
    <name type="ordered locus">MS1806</name>
</gene>
<dbReference type="EC" id="6.3.5.3" evidence="1"/>
<dbReference type="EMBL" id="AE016827">
    <property type="protein sequence ID" value="AAU38413.1"/>
    <property type="molecule type" value="Genomic_DNA"/>
</dbReference>
<dbReference type="RefSeq" id="WP_011200969.1">
    <property type="nucleotide sequence ID" value="NC_006300.1"/>
</dbReference>
<dbReference type="SMR" id="Q65RJ7"/>
<dbReference type="STRING" id="221988.MS1806"/>
<dbReference type="KEGG" id="msu:MS1806"/>
<dbReference type="eggNOG" id="COG0046">
    <property type="taxonomic scope" value="Bacteria"/>
</dbReference>
<dbReference type="eggNOG" id="COG0047">
    <property type="taxonomic scope" value="Bacteria"/>
</dbReference>
<dbReference type="HOGENOM" id="CLU_001031_0_2_6"/>
<dbReference type="OrthoDB" id="9804441at2"/>
<dbReference type="UniPathway" id="UPA00074">
    <property type="reaction ID" value="UER00128"/>
</dbReference>
<dbReference type="Proteomes" id="UP000000607">
    <property type="component" value="Chromosome"/>
</dbReference>
<dbReference type="GO" id="GO:0005737">
    <property type="term" value="C:cytoplasm"/>
    <property type="evidence" value="ECO:0007669"/>
    <property type="project" value="UniProtKB-SubCell"/>
</dbReference>
<dbReference type="GO" id="GO:0005524">
    <property type="term" value="F:ATP binding"/>
    <property type="evidence" value="ECO:0007669"/>
    <property type="project" value="UniProtKB-UniRule"/>
</dbReference>
<dbReference type="GO" id="GO:0046872">
    <property type="term" value="F:metal ion binding"/>
    <property type="evidence" value="ECO:0007669"/>
    <property type="project" value="UniProtKB-KW"/>
</dbReference>
<dbReference type="GO" id="GO:0004642">
    <property type="term" value="F:phosphoribosylformylglycinamidine synthase activity"/>
    <property type="evidence" value="ECO:0007669"/>
    <property type="project" value="UniProtKB-UniRule"/>
</dbReference>
<dbReference type="GO" id="GO:0006189">
    <property type="term" value="P:'de novo' IMP biosynthetic process"/>
    <property type="evidence" value="ECO:0007669"/>
    <property type="project" value="UniProtKB-UniRule"/>
</dbReference>
<dbReference type="CDD" id="cd01740">
    <property type="entry name" value="GATase1_FGAR_AT"/>
    <property type="match status" value="1"/>
</dbReference>
<dbReference type="CDD" id="cd02203">
    <property type="entry name" value="PurL_repeat1"/>
    <property type="match status" value="1"/>
</dbReference>
<dbReference type="CDD" id="cd02204">
    <property type="entry name" value="PurL_repeat2"/>
    <property type="match status" value="1"/>
</dbReference>
<dbReference type="FunFam" id="1.10.8.750:FF:000002">
    <property type="entry name" value="Phosphoribosylformylglycinamidine synthase"/>
    <property type="match status" value="1"/>
</dbReference>
<dbReference type="FunFam" id="3.30.1330.10:FF:000002">
    <property type="entry name" value="Phosphoribosylformylglycinamidine synthase"/>
    <property type="match status" value="1"/>
</dbReference>
<dbReference type="FunFam" id="3.30.1330.10:FF:000005">
    <property type="entry name" value="Phosphoribosylformylglycinamidine synthase"/>
    <property type="match status" value="1"/>
</dbReference>
<dbReference type="FunFam" id="3.40.50.880:FF:000008">
    <property type="entry name" value="Phosphoribosylformylglycinamidine synthase"/>
    <property type="match status" value="1"/>
</dbReference>
<dbReference type="FunFam" id="3.90.650.10:FF:000002">
    <property type="entry name" value="Phosphoribosylformylglycinamidine synthase"/>
    <property type="match status" value="1"/>
</dbReference>
<dbReference type="FunFam" id="3.90.650.10:FF:000005">
    <property type="entry name" value="Phosphoribosylformylglycinamidine synthase"/>
    <property type="match status" value="1"/>
</dbReference>
<dbReference type="Gene3D" id="3.40.50.880">
    <property type="match status" value="1"/>
</dbReference>
<dbReference type="Gene3D" id="1.10.8.750">
    <property type="entry name" value="Phosphoribosylformylglycinamidine synthase, linker domain"/>
    <property type="match status" value="1"/>
</dbReference>
<dbReference type="Gene3D" id="3.90.650.10">
    <property type="entry name" value="PurM-like C-terminal domain"/>
    <property type="match status" value="2"/>
</dbReference>
<dbReference type="Gene3D" id="3.30.1330.10">
    <property type="entry name" value="PurM-like, N-terminal domain"/>
    <property type="match status" value="2"/>
</dbReference>
<dbReference type="HAMAP" id="MF_00419">
    <property type="entry name" value="PurL_1"/>
    <property type="match status" value="1"/>
</dbReference>
<dbReference type="InterPro" id="IPR029062">
    <property type="entry name" value="Class_I_gatase-like"/>
</dbReference>
<dbReference type="InterPro" id="IPR040707">
    <property type="entry name" value="FGAR-AT_N"/>
</dbReference>
<dbReference type="InterPro" id="IPR055181">
    <property type="entry name" value="FGAR-AT_PurM_N-like"/>
</dbReference>
<dbReference type="InterPro" id="IPR010073">
    <property type="entry name" value="PurL_large"/>
</dbReference>
<dbReference type="InterPro" id="IPR041609">
    <property type="entry name" value="PurL_linker"/>
</dbReference>
<dbReference type="InterPro" id="IPR010918">
    <property type="entry name" value="PurM-like_C_dom"/>
</dbReference>
<dbReference type="InterPro" id="IPR036676">
    <property type="entry name" value="PurM-like_C_sf"/>
</dbReference>
<dbReference type="InterPro" id="IPR036921">
    <property type="entry name" value="PurM-like_N_sf"/>
</dbReference>
<dbReference type="InterPro" id="IPR036604">
    <property type="entry name" value="PurS-like_sf"/>
</dbReference>
<dbReference type="NCBIfam" id="TIGR01735">
    <property type="entry name" value="FGAM_synt"/>
    <property type="match status" value="1"/>
</dbReference>
<dbReference type="NCBIfam" id="NF003672">
    <property type="entry name" value="PRK05297.1"/>
    <property type="match status" value="1"/>
</dbReference>
<dbReference type="PANTHER" id="PTHR10099">
    <property type="entry name" value="PHOSPHORIBOSYLFORMYLGLYCINAMIDINE SYNTHASE"/>
    <property type="match status" value="1"/>
</dbReference>
<dbReference type="PANTHER" id="PTHR10099:SF1">
    <property type="entry name" value="PHOSPHORIBOSYLFORMYLGLYCINAMIDINE SYNTHASE"/>
    <property type="match status" value="1"/>
</dbReference>
<dbReference type="Pfam" id="PF02769">
    <property type="entry name" value="AIRS_C"/>
    <property type="match status" value="2"/>
</dbReference>
<dbReference type="Pfam" id="PF18072">
    <property type="entry name" value="FGAR-AT_linker"/>
    <property type="match status" value="1"/>
</dbReference>
<dbReference type="Pfam" id="PF18076">
    <property type="entry name" value="FGAR-AT_N"/>
    <property type="match status" value="1"/>
</dbReference>
<dbReference type="Pfam" id="PF22689">
    <property type="entry name" value="FGAR-AT_PurM_N-like"/>
    <property type="match status" value="1"/>
</dbReference>
<dbReference type="Pfam" id="PF13507">
    <property type="entry name" value="GATase_5"/>
    <property type="match status" value="1"/>
</dbReference>
<dbReference type="SMART" id="SM01211">
    <property type="entry name" value="GATase_5"/>
    <property type="match status" value="1"/>
</dbReference>
<dbReference type="SUPFAM" id="SSF52317">
    <property type="entry name" value="Class I glutamine amidotransferase-like"/>
    <property type="match status" value="1"/>
</dbReference>
<dbReference type="SUPFAM" id="SSF109736">
    <property type="entry name" value="FGAM synthase PurL, linker domain"/>
    <property type="match status" value="1"/>
</dbReference>
<dbReference type="SUPFAM" id="SSF56042">
    <property type="entry name" value="PurM C-terminal domain-like"/>
    <property type="match status" value="2"/>
</dbReference>
<dbReference type="SUPFAM" id="SSF55326">
    <property type="entry name" value="PurM N-terminal domain-like"/>
    <property type="match status" value="2"/>
</dbReference>
<dbReference type="SUPFAM" id="SSF82697">
    <property type="entry name" value="PurS-like"/>
    <property type="match status" value="1"/>
</dbReference>
<dbReference type="PROSITE" id="PS51273">
    <property type="entry name" value="GATASE_TYPE_1"/>
    <property type="match status" value="1"/>
</dbReference>
<reference key="1">
    <citation type="journal article" date="2004" name="Nat. Biotechnol.">
        <title>The genome sequence of the capnophilic rumen bacterium Mannheimia succiniciproducens.</title>
        <authorList>
            <person name="Hong S.H."/>
            <person name="Kim J.S."/>
            <person name="Lee S.Y."/>
            <person name="In Y.H."/>
            <person name="Choi S.S."/>
            <person name="Rih J.-K."/>
            <person name="Kim C.H."/>
            <person name="Jeong H."/>
            <person name="Hur C.G."/>
            <person name="Kim J.J."/>
        </authorList>
    </citation>
    <scope>NUCLEOTIDE SEQUENCE [LARGE SCALE GENOMIC DNA]</scope>
    <source>
        <strain>KCTC 0769BP / MBEL55E</strain>
    </source>
</reference>
<protein>
    <recommendedName>
        <fullName evidence="1">Phosphoribosylformylglycinamidine synthase</fullName>
        <shortName evidence="1">FGAM synthase</shortName>
        <shortName evidence="1">FGAMS</shortName>
        <ecNumber evidence="1">6.3.5.3</ecNumber>
    </recommendedName>
    <alternativeName>
        <fullName evidence="1">Formylglycinamide ribonucleotide amidotransferase</fullName>
        <shortName evidence="1">FGAR amidotransferase</shortName>
        <shortName evidence="1">FGAR-AT</shortName>
    </alternativeName>
</protein>
<keyword id="KW-0067">ATP-binding</keyword>
<keyword id="KW-0963">Cytoplasm</keyword>
<keyword id="KW-0315">Glutamine amidotransferase</keyword>
<keyword id="KW-0436">Ligase</keyword>
<keyword id="KW-0460">Magnesium</keyword>
<keyword id="KW-0479">Metal-binding</keyword>
<keyword id="KW-0547">Nucleotide-binding</keyword>
<keyword id="KW-0658">Purine biosynthesis</keyword>
<evidence type="ECO:0000255" key="1">
    <source>
        <dbReference type="HAMAP-Rule" id="MF_00419"/>
    </source>
</evidence>
<evidence type="ECO:0000256" key="2">
    <source>
        <dbReference type="SAM" id="MobiDB-lite"/>
    </source>
</evidence>
<comment type="function">
    <text evidence="1">Phosphoribosylformylglycinamidine synthase involved in the purines biosynthetic pathway. Catalyzes the ATP-dependent conversion of formylglycinamide ribonucleotide (FGAR) and glutamine to yield formylglycinamidine ribonucleotide (FGAM) and glutamate.</text>
</comment>
<comment type="catalytic activity">
    <reaction evidence="1">
        <text>N(2)-formyl-N(1)-(5-phospho-beta-D-ribosyl)glycinamide + L-glutamine + ATP + H2O = 2-formamido-N(1)-(5-O-phospho-beta-D-ribosyl)acetamidine + L-glutamate + ADP + phosphate + H(+)</text>
        <dbReference type="Rhea" id="RHEA:17129"/>
        <dbReference type="ChEBI" id="CHEBI:15377"/>
        <dbReference type="ChEBI" id="CHEBI:15378"/>
        <dbReference type="ChEBI" id="CHEBI:29985"/>
        <dbReference type="ChEBI" id="CHEBI:30616"/>
        <dbReference type="ChEBI" id="CHEBI:43474"/>
        <dbReference type="ChEBI" id="CHEBI:58359"/>
        <dbReference type="ChEBI" id="CHEBI:147286"/>
        <dbReference type="ChEBI" id="CHEBI:147287"/>
        <dbReference type="ChEBI" id="CHEBI:456216"/>
        <dbReference type="EC" id="6.3.5.3"/>
    </reaction>
</comment>
<comment type="pathway">
    <text evidence="1">Purine metabolism; IMP biosynthesis via de novo pathway; 5-amino-1-(5-phospho-D-ribosyl)imidazole from N(2)-formyl-N(1)-(5-phospho-D-ribosyl)glycinamide: step 1/2.</text>
</comment>
<comment type="subunit">
    <text evidence="1">Monomer.</text>
</comment>
<comment type="subcellular location">
    <subcellularLocation>
        <location evidence="1">Cytoplasm</location>
    </subcellularLocation>
</comment>
<comment type="similarity">
    <text evidence="1">In the N-terminal section; belongs to the FGAMS family.</text>
</comment>